<accession>D6C4K2</accession>
<feature type="signal peptide" evidence="2">
    <location>
        <begin position="1"/>
        <end position="20"/>
    </location>
</feature>
<feature type="propeptide" id="PRO_0000414997" evidence="1">
    <location>
        <begin position="21"/>
        <end position="36"/>
    </location>
</feature>
<feature type="peptide" id="PRO_0000414998" description="Conotoxin Cl6.12">
    <location>
        <begin position="38"/>
        <end position="77"/>
    </location>
</feature>
<feature type="disulfide bond" evidence="1">
    <location>
        <begin position="43"/>
        <end position="58"/>
    </location>
</feature>
<feature type="disulfide bond" evidence="1">
    <location>
        <begin position="51"/>
        <end position="62"/>
    </location>
</feature>
<feature type="disulfide bond" evidence="1">
    <location>
        <begin position="57"/>
        <end position="68"/>
    </location>
</feature>
<protein>
    <recommendedName>
        <fullName>Conotoxin Cl6.12</fullName>
    </recommendedName>
</protein>
<comment type="subcellular location">
    <subcellularLocation>
        <location evidence="1">Secreted</location>
    </subcellularLocation>
</comment>
<comment type="tissue specificity">
    <text>Expressed by the venom duct.</text>
</comment>
<comment type="domain">
    <text evidence="1">The presence of a 'disulfide through disulfide knot' structurally defines this protein as a knottin.</text>
</comment>
<comment type="domain">
    <text>The cysteine framework is VI/VII (C-C-CC-C-C).</text>
</comment>
<proteinExistence type="inferred from homology"/>
<dbReference type="EMBL" id="FJ959144">
    <property type="protein sequence ID" value="ADB93114.1"/>
    <property type="molecule type" value="Genomic_DNA"/>
</dbReference>
<dbReference type="ConoServer" id="4028">
    <property type="toxin name" value="Cal6.12 precursor"/>
</dbReference>
<dbReference type="GO" id="GO:0005576">
    <property type="term" value="C:extracellular region"/>
    <property type="evidence" value="ECO:0007669"/>
    <property type="project" value="UniProtKB-SubCell"/>
</dbReference>
<dbReference type="GO" id="GO:0008200">
    <property type="term" value="F:ion channel inhibitor activity"/>
    <property type="evidence" value="ECO:0007669"/>
    <property type="project" value="InterPro"/>
</dbReference>
<dbReference type="GO" id="GO:0090729">
    <property type="term" value="F:toxin activity"/>
    <property type="evidence" value="ECO:0007669"/>
    <property type="project" value="UniProtKB-KW"/>
</dbReference>
<dbReference type="InterPro" id="IPR004214">
    <property type="entry name" value="Conotoxin"/>
</dbReference>
<dbReference type="Pfam" id="PF02950">
    <property type="entry name" value="Conotoxin"/>
    <property type="match status" value="1"/>
</dbReference>
<name>U6CC_CONCL</name>
<evidence type="ECO:0000250" key="1"/>
<evidence type="ECO:0000255" key="2"/>
<reference key="1">
    <citation type="journal article" date="2010" name="Mol. Phylogenet. Evol.">
        <title>Evolution of Conus peptide toxins: analysis of Conus californicus Reeve, 1844.</title>
        <authorList>
            <person name="Biggs J.S."/>
            <person name="Watkins M."/>
            <person name="Puillandre N."/>
            <person name="Ownby J.P."/>
            <person name="Lopez-Vera E."/>
            <person name="Christensen S."/>
            <person name="Moreno K.J."/>
            <person name="Bernaldez J."/>
            <person name="Licea-Navarro A."/>
            <person name="Corneli P.S."/>
            <person name="Olivera B.M."/>
        </authorList>
    </citation>
    <scope>NUCLEOTIDE SEQUENCE [GENOMIC DNA]</scope>
</reference>
<sequence length="77" mass="8662">MKFYLLLTAALLLTAVIIEAAPTDHQDEARDLMREERDDKSNCPISHPNYCSFTPVCCKHECLSNNKCSSSEFIPGQ</sequence>
<keyword id="KW-1015">Disulfide bond</keyword>
<keyword id="KW-0960">Knottin</keyword>
<keyword id="KW-0528">Neurotoxin</keyword>
<keyword id="KW-0964">Secreted</keyword>
<keyword id="KW-0732">Signal</keyword>
<keyword id="KW-0800">Toxin</keyword>
<organism>
    <name type="scientific">Californiconus californicus</name>
    <name type="common">California cone</name>
    <name type="synonym">Conus californicus</name>
    <dbReference type="NCBI Taxonomy" id="1736779"/>
    <lineage>
        <taxon>Eukaryota</taxon>
        <taxon>Metazoa</taxon>
        <taxon>Spiralia</taxon>
        <taxon>Lophotrochozoa</taxon>
        <taxon>Mollusca</taxon>
        <taxon>Gastropoda</taxon>
        <taxon>Caenogastropoda</taxon>
        <taxon>Neogastropoda</taxon>
        <taxon>Conoidea</taxon>
        <taxon>Conidae</taxon>
        <taxon>Californiconus</taxon>
    </lineage>
</organism>